<evidence type="ECO:0000255" key="1">
    <source>
        <dbReference type="HAMAP-Rule" id="MF_00558"/>
    </source>
</evidence>
<comment type="function">
    <text evidence="1">Succinyl-CoA synthetase functions in the citric acid cycle (TCA), coupling the hydrolysis of succinyl-CoA to the synthesis of either ATP or GTP and thus represents the only step of substrate-level phosphorylation in the TCA. The beta subunit provides nucleotide specificity of the enzyme and binds the substrate succinate, while the binding sites for coenzyme A and phosphate are found in the alpha subunit.</text>
</comment>
<comment type="catalytic activity">
    <reaction evidence="1">
        <text>succinate + ATP + CoA = succinyl-CoA + ADP + phosphate</text>
        <dbReference type="Rhea" id="RHEA:17661"/>
        <dbReference type="ChEBI" id="CHEBI:30031"/>
        <dbReference type="ChEBI" id="CHEBI:30616"/>
        <dbReference type="ChEBI" id="CHEBI:43474"/>
        <dbReference type="ChEBI" id="CHEBI:57287"/>
        <dbReference type="ChEBI" id="CHEBI:57292"/>
        <dbReference type="ChEBI" id="CHEBI:456216"/>
        <dbReference type="EC" id="6.2.1.5"/>
    </reaction>
    <physiologicalReaction direction="right-to-left" evidence="1">
        <dbReference type="Rhea" id="RHEA:17663"/>
    </physiologicalReaction>
</comment>
<comment type="catalytic activity">
    <reaction evidence="1">
        <text>GTP + succinate + CoA = succinyl-CoA + GDP + phosphate</text>
        <dbReference type="Rhea" id="RHEA:22120"/>
        <dbReference type="ChEBI" id="CHEBI:30031"/>
        <dbReference type="ChEBI" id="CHEBI:37565"/>
        <dbReference type="ChEBI" id="CHEBI:43474"/>
        <dbReference type="ChEBI" id="CHEBI:57287"/>
        <dbReference type="ChEBI" id="CHEBI:57292"/>
        <dbReference type="ChEBI" id="CHEBI:58189"/>
    </reaction>
    <physiologicalReaction direction="right-to-left" evidence="1">
        <dbReference type="Rhea" id="RHEA:22122"/>
    </physiologicalReaction>
</comment>
<comment type="cofactor">
    <cofactor evidence="1">
        <name>Mg(2+)</name>
        <dbReference type="ChEBI" id="CHEBI:18420"/>
    </cofactor>
    <text evidence="1">Binds 1 Mg(2+) ion per subunit.</text>
</comment>
<comment type="pathway">
    <text evidence="1">Carbohydrate metabolism; tricarboxylic acid cycle; succinate from succinyl-CoA (ligase route): step 1/1.</text>
</comment>
<comment type="subunit">
    <text evidence="1">Heterotetramer of two alpha and two beta subunits.</text>
</comment>
<comment type="similarity">
    <text evidence="1">Belongs to the succinate/malate CoA ligase beta subunit family.</text>
</comment>
<gene>
    <name evidence="1" type="primary">sucC</name>
    <name type="ordered locus">PSHAa1645</name>
</gene>
<organism>
    <name type="scientific">Pseudoalteromonas translucida (strain TAC 125)</name>
    <dbReference type="NCBI Taxonomy" id="326442"/>
    <lineage>
        <taxon>Bacteria</taxon>
        <taxon>Pseudomonadati</taxon>
        <taxon>Pseudomonadota</taxon>
        <taxon>Gammaproteobacteria</taxon>
        <taxon>Alteromonadales</taxon>
        <taxon>Pseudoalteromonadaceae</taxon>
        <taxon>Pseudoalteromonas</taxon>
    </lineage>
</organism>
<dbReference type="EC" id="6.2.1.5" evidence="1"/>
<dbReference type="EMBL" id="CR954246">
    <property type="protein sequence ID" value="CAI86718.1"/>
    <property type="molecule type" value="Genomic_DNA"/>
</dbReference>
<dbReference type="SMR" id="Q3IGW5"/>
<dbReference type="STRING" id="326442.PSHAa1645"/>
<dbReference type="KEGG" id="pha:PSHAa1645"/>
<dbReference type="eggNOG" id="COG0045">
    <property type="taxonomic scope" value="Bacteria"/>
</dbReference>
<dbReference type="HOGENOM" id="CLU_037430_4_0_6"/>
<dbReference type="BioCyc" id="PHAL326442:PSHA_RS08065-MONOMER"/>
<dbReference type="UniPathway" id="UPA00223">
    <property type="reaction ID" value="UER00999"/>
</dbReference>
<dbReference type="Proteomes" id="UP000006843">
    <property type="component" value="Chromosome I"/>
</dbReference>
<dbReference type="GO" id="GO:0005829">
    <property type="term" value="C:cytosol"/>
    <property type="evidence" value="ECO:0007669"/>
    <property type="project" value="TreeGrafter"/>
</dbReference>
<dbReference type="GO" id="GO:0042709">
    <property type="term" value="C:succinate-CoA ligase complex"/>
    <property type="evidence" value="ECO:0007669"/>
    <property type="project" value="TreeGrafter"/>
</dbReference>
<dbReference type="GO" id="GO:0005524">
    <property type="term" value="F:ATP binding"/>
    <property type="evidence" value="ECO:0007669"/>
    <property type="project" value="UniProtKB-UniRule"/>
</dbReference>
<dbReference type="GO" id="GO:0000287">
    <property type="term" value="F:magnesium ion binding"/>
    <property type="evidence" value="ECO:0007669"/>
    <property type="project" value="UniProtKB-UniRule"/>
</dbReference>
<dbReference type="GO" id="GO:0004775">
    <property type="term" value="F:succinate-CoA ligase (ADP-forming) activity"/>
    <property type="evidence" value="ECO:0007669"/>
    <property type="project" value="UniProtKB-UniRule"/>
</dbReference>
<dbReference type="GO" id="GO:0004776">
    <property type="term" value="F:succinate-CoA ligase (GDP-forming) activity"/>
    <property type="evidence" value="ECO:0007669"/>
    <property type="project" value="RHEA"/>
</dbReference>
<dbReference type="GO" id="GO:0006104">
    <property type="term" value="P:succinyl-CoA metabolic process"/>
    <property type="evidence" value="ECO:0007669"/>
    <property type="project" value="TreeGrafter"/>
</dbReference>
<dbReference type="GO" id="GO:0006099">
    <property type="term" value="P:tricarboxylic acid cycle"/>
    <property type="evidence" value="ECO:0007669"/>
    <property type="project" value="UniProtKB-UniRule"/>
</dbReference>
<dbReference type="FunFam" id="3.30.1490.20:FF:000002">
    <property type="entry name" value="Succinate--CoA ligase [ADP-forming] subunit beta"/>
    <property type="match status" value="1"/>
</dbReference>
<dbReference type="FunFam" id="3.30.470.20:FF:000002">
    <property type="entry name" value="Succinate--CoA ligase [ADP-forming] subunit beta"/>
    <property type="match status" value="1"/>
</dbReference>
<dbReference type="FunFam" id="3.40.50.261:FF:000001">
    <property type="entry name" value="Succinate--CoA ligase [ADP-forming] subunit beta"/>
    <property type="match status" value="1"/>
</dbReference>
<dbReference type="Gene3D" id="3.30.1490.20">
    <property type="entry name" value="ATP-grasp fold, A domain"/>
    <property type="match status" value="1"/>
</dbReference>
<dbReference type="Gene3D" id="3.30.470.20">
    <property type="entry name" value="ATP-grasp fold, B domain"/>
    <property type="match status" value="1"/>
</dbReference>
<dbReference type="Gene3D" id="3.40.50.261">
    <property type="entry name" value="Succinyl-CoA synthetase domains"/>
    <property type="match status" value="1"/>
</dbReference>
<dbReference type="HAMAP" id="MF_00558">
    <property type="entry name" value="Succ_CoA_beta"/>
    <property type="match status" value="1"/>
</dbReference>
<dbReference type="InterPro" id="IPR011761">
    <property type="entry name" value="ATP-grasp"/>
</dbReference>
<dbReference type="InterPro" id="IPR013650">
    <property type="entry name" value="ATP-grasp_succ-CoA_synth-type"/>
</dbReference>
<dbReference type="InterPro" id="IPR013815">
    <property type="entry name" value="ATP_grasp_subdomain_1"/>
</dbReference>
<dbReference type="InterPro" id="IPR017866">
    <property type="entry name" value="Succ-CoA_synthase_bsu_CS"/>
</dbReference>
<dbReference type="InterPro" id="IPR005811">
    <property type="entry name" value="SUCC_ACL_C"/>
</dbReference>
<dbReference type="InterPro" id="IPR005809">
    <property type="entry name" value="Succ_CoA_ligase-like_bsu"/>
</dbReference>
<dbReference type="InterPro" id="IPR016102">
    <property type="entry name" value="Succinyl-CoA_synth-like"/>
</dbReference>
<dbReference type="NCBIfam" id="NF001913">
    <property type="entry name" value="PRK00696.1"/>
    <property type="match status" value="1"/>
</dbReference>
<dbReference type="NCBIfam" id="TIGR01016">
    <property type="entry name" value="sucCoAbeta"/>
    <property type="match status" value="1"/>
</dbReference>
<dbReference type="PANTHER" id="PTHR11815:SF10">
    <property type="entry name" value="SUCCINATE--COA LIGASE [GDP-FORMING] SUBUNIT BETA, MITOCHONDRIAL"/>
    <property type="match status" value="1"/>
</dbReference>
<dbReference type="PANTHER" id="PTHR11815">
    <property type="entry name" value="SUCCINYL-COA SYNTHETASE BETA CHAIN"/>
    <property type="match status" value="1"/>
</dbReference>
<dbReference type="Pfam" id="PF08442">
    <property type="entry name" value="ATP-grasp_2"/>
    <property type="match status" value="1"/>
</dbReference>
<dbReference type="Pfam" id="PF00549">
    <property type="entry name" value="Ligase_CoA"/>
    <property type="match status" value="1"/>
</dbReference>
<dbReference type="PIRSF" id="PIRSF001554">
    <property type="entry name" value="SucCS_beta"/>
    <property type="match status" value="1"/>
</dbReference>
<dbReference type="SUPFAM" id="SSF56059">
    <property type="entry name" value="Glutathione synthetase ATP-binding domain-like"/>
    <property type="match status" value="1"/>
</dbReference>
<dbReference type="SUPFAM" id="SSF52210">
    <property type="entry name" value="Succinyl-CoA synthetase domains"/>
    <property type="match status" value="1"/>
</dbReference>
<dbReference type="PROSITE" id="PS50975">
    <property type="entry name" value="ATP_GRASP"/>
    <property type="match status" value="1"/>
</dbReference>
<dbReference type="PROSITE" id="PS01217">
    <property type="entry name" value="SUCCINYL_COA_LIG_3"/>
    <property type="match status" value="1"/>
</dbReference>
<feature type="chain" id="PRO_1000082169" description="Succinate--CoA ligase [ADP-forming] subunit beta">
    <location>
        <begin position="1"/>
        <end position="388"/>
    </location>
</feature>
<feature type="domain" description="ATP-grasp" evidence="1">
    <location>
        <begin position="9"/>
        <end position="244"/>
    </location>
</feature>
<feature type="binding site" evidence="1">
    <location>
        <position position="46"/>
    </location>
    <ligand>
        <name>ATP</name>
        <dbReference type="ChEBI" id="CHEBI:30616"/>
    </ligand>
</feature>
<feature type="binding site" evidence="1">
    <location>
        <begin position="53"/>
        <end position="55"/>
    </location>
    <ligand>
        <name>ATP</name>
        <dbReference type="ChEBI" id="CHEBI:30616"/>
    </ligand>
</feature>
<feature type="binding site" evidence="1">
    <location>
        <position position="99"/>
    </location>
    <ligand>
        <name>ATP</name>
        <dbReference type="ChEBI" id="CHEBI:30616"/>
    </ligand>
</feature>
<feature type="binding site" evidence="1">
    <location>
        <position position="102"/>
    </location>
    <ligand>
        <name>ATP</name>
        <dbReference type="ChEBI" id="CHEBI:30616"/>
    </ligand>
</feature>
<feature type="binding site" evidence="1">
    <location>
        <position position="107"/>
    </location>
    <ligand>
        <name>ATP</name>
        <dbReference type="ChEBI" id="CHEBI:30616"/>
    </ligand>
</feature>
<feature type="binding site" evidence="1">
    <location>
        <position position="199"/>
    </location>
    <ligand>
        <name>Mg(2+)</name>
        <dbReference type="ChEBI" id="CHEBI:18420"/>
    </ligand>
</feature>
<feature type="binding site" evidence="1">
    <location>
        <position position="213"/>
    </location>
    <ligand>
        <name>Mg(2+)</name>
        <dbReference type="ChEBI" id="CHEBI:18420"/>
    </ligand>
</feature>
<feature type="binding site" evidence="1">
    <location>
        <position position="264"/>
    </location>
    <ligand>
        <name>substrate</name>
        <note>ligand shared with subunit alpha</note>
    </ligand>
</feature>
<feature type="binding site" evidence="1">
    <location>
        <begin position="321"/>
        <end position="323"/>
    </location>
    <ligand>
        <name>substrate</name>
        <note>ligand shared with subunit alpha</note>
    </ligand>
</feature>
<proteinExistence type="inferred from homology"/>
<keyword id="KW-0067">ATP-binding</keyword>
<keyword id="KW-0436">Ligase</keyword>
<keyword id="KW-0460">Magnesium</keyword>
<keyword id="KW-0479">Metal-binding</keyword>
<keyword id="KW-0547">Nucleotide-binding</keyword>
<keyword id="KW-1185">Reference proteome</keyword>
<keyword id="KW-0816">Tricarboxylic acid cycle</keyword>
<protein>
    <recommendedName>
        <fullName evidence="1">Succinate--CoA ligase [ADP-forming] subunit beta</fullName>
        <ecNumber evidence="1">6.2.1.5</ecNumber>
    </recommendedName>
    <alternativeName>
        <fullName evidence="1">Succinyl-CoA synthetase subunit beta</fullName>
        <shortName evidence="1">SCS-beta</shortName>
    </alternativeName>
</protein>
<reference key="1">
    <citation type="journal article" date="2005" name="Genome Res.">
        <title>Coping with cold: the genome of the versatile marine Antarctica bacterium Pseudoalteromonas haloplanktis TAC125.</title>
        <authorList>
            <person name="Medigue C."/>
            <person name="Krin E."/>
            <person name="Pascal G."/>
            <person name="Barbe V."/>
            <person name="Bernsel A."/>
            <person name="Bertin P.N."/>
            <person name="Cheung F."/>
            <person name="Cruveiller S."/>
            <person name="D'Amico S."/>
            <person name="Duilio A."/>
            <person name="Fang G."/>
            <person name="Feller G."/>
            <person name="Ho C."/>
            <person name="Mangenot S."/>
            <person name="Marino G."/>
            <person name="Nilsson J."/>
            <person name="Parrilli E."/>
            <person name="Rocha E.P.C."/>
            <person name="Rouy Z."/>
            <person name="Sekowska A."/>
            <person name="Tutino M.L."/>
            <person name="Vallenet D."/>
            <person name="von Heijne G."/>
            <person name="Danchin A."/>
        </authorList>
    </citation>
    <scope>NUCLEOTIDE SEQUENCE [LARGE SCALE GENOMIC DNA]</scope>
    <source>
        <strain>TAC 125</strain>
    </source>
</reference>
<name>SUCC_PSET1</name>
<accession>Q3IGW5</accession>
<sequence>MNLHEYQAKQLFAEYGLPVSTGYACDTPEEAAAAAEKIGGDMWVVKTQVHAGGRGKAGGVKLVKTIDEVKAFAANWLGKNLVTYQTDEKGQPVAKILVESCTDIANELYLGAVVDRASRKVVFMASTEGGVEIETVAEETPELIHKAEIDPLVGPQAYQARELGFKLGLNPVQMKQFVKIFMGLGKMFTDFDFALLEINPLVITDEGNLHCLDGKIGIDGNALYRQPKIREFHDPSQEDSREAHAASFELNYVALDGNVGCMVNGAGLAMGTMDIVNLHGGKPANFLDVGGGATKERVSEAFKIILSDDNVKAVLVNIFGGIVRCDMIAEGIIGAVKEVGVNVPVVVRLEGTNAELGREVLKNSGLDIIAAESLTDAAEKVVAAAEGK</sequence>